<gene>
    <name evidence="1" type="primary">truA</name>
    <name type="ordered locus">Bd0491</name>
</gene>
<name>TRUA_BDEBA</name>
<comment type="function">
    <text evidence="1">Formation of pseudouridine at positions 38, 39 and 40 in the anticodon stem and loop of transfer RNAs.</text>
</comment>
<comment type="catalytic activity">
    <reaction evidence="1">
        <text>uridine(38/39/40) in tRNA = pseudouridine(38/39/40) in tRNA</text>
        <dbReference type="Rhea" id="RHEA:22376"/>
        <dbReference type="Rhea" id="RHEA-COMP:10085"/>
        <dbReference type="Rhea" id="RHEA-COMP:10087"/>
        <dbReference type="ChEBI" id="CHEBI:65314"/>
        <dbReference type="ChEBI" id="CHEBI:65315"/>
        <dbReference type="EC" id="5.4.99.12"/>
    </reaction>
</comment>
<comment type="subunit">
    <text evidence="1">Homodimer.</text>
</comment>
<comment type="similarity">
    <text evidence="1">Belongs to the tRNA pseudouridine synthase TruA family.</text>
</comment>
<sequence>MTTKVRFTVAYDGTGFCGWQKQKPEDQISVAQVIEEALSKVFNEKITLFASGRTDAGVHALNQVCHFSTHRKIDPNKKWDLCWALNSHLPPSIVAKKAWIAPDDFHATLSATHKTYRYLIVNKPRPSAHLNRYADWVRLPIDIEHLQESSKYLLGNQDFKSFQSVGTPVPDTVREIYKADWEWRKPGVMQFTITGSGFLKQMVRNIVGTSLFLERKGLDPSKMQEIIAAQDRMKAGPPAPAQGLYLMKVYYPQDLDNRCLEL</sequence>
<feature type="chain" id="PRO_0000057338" description="tRNA pseudouridine synthase A">
    <location>
        <begin position="1"/>
        <end position="262"/>
    </location>
</feature>
<feature type="active site" description="Nucleophile" evidence="1">
    <location>
        <position position="55"/>
    </location>
</feature>
<feature type="binding site" evidence="1">
    <location>
        <position position="116"/>
    </location>
    <ligand>
        <name>substrate</name>
    </ligand>
</feature>
<evidence type="ECO:0000255" key="1">
    <source>
        <dbReference type="HAMAP-Rule" id="MF_00171"/>
    </source>
</evidence>
<reference key="1">
    <citation type="journal article" date="2004" name="Science">
        <title>A predator unmasked: life cycle of Bdellovibrio bacteriovorus from a genomic perspective.</title>
        <authorList>
            <person name="Rendulic S."/>
            <person name="Jagtap P."/>
            <person name="Rosinus A."/>
            <person name="Eppinger M."/>
            <person name="Baar C."/>
            <person name="Lanz C."/>
            <person name="Keller H."/>
            <person name="Lambert C."/>
            <person name="Evans K.J."/>
            <person name="Goesmann A."/>
            <person name="Meyer F."/>
            <person name="Sockett R.E."/>
            <person name="Schuster S.C."/>
        </authorList>
    </citation>
    <scope>NUCLEOTIDE SEQUENCE [LARGE SCALE GENOMIC DNA]</scope>
    <source>
        <strain>ATCC 15356 / DSM 50701 / NCIMB 9529 / HD100</strain>
    </source>
</reference>
<keyword id="KW-0413">Isomerase</keyword>
<keyword id="KW-1185">Reference proteome</keyword>
<keyword id="KW-0819">tRNA processing</keyword>
<protein>
    <recommendedName>
        <fullName evidence="1">tRNA pseudouridine synthase A</fullName>
        <ecNumber evidence="1">5.4.99.12</ecNumber>
    </recommendedName>
    <alternativeName>
        <fullName evidence="1">tRNA pseudouridine(38-40) synthase</fullName>
    </alternativeName>
    <alternativeName>
        <fullName evidence="1">tRNA pseudouridylate synthase I</fullName>
    </alternativeName>
    <alternativeName>
        <fullName evidence="1">tRNA-uridine isomerase I</fullName>
    </alternativeName>
</protein>
<organism>
    <name type="scientific">Bdellovibrio bacteriovorus (strain ATCC 15356 / DSM 50701 / NCIMB 9529 / HD100)</name>
    <dbReference type="NCBI Taxonomy" id="264462"/>
    <lineage>
        <taxon>Bacteria</taxon>
        <taxon>Pseudomonadati</taxon>
        <taxon>Bdellovibrionota</taxon>
        <taxon>Bdellovibrionia</taxon>
        <taxon>Bdellovibrionales</taxon>
        <taxon>Pseudobdellovibrionaceae</taxon>
        <taxon>Bdellovibrio</taxon>
    </lineage>
</organism>
<proteinExistence type="inferred from homology"/>
<accession>Q6MQH6</accession>
<dbReference type="EC" id="5.4.99.12" evidence="1"/>
<dbReference type="EMBL" id="BX842647">
    <property type="protein sequence ID" value="CAE78471.1"/>
    <property type="molecule type" value="Genomic_DNA"/>
</dbReference>
<dbReference type="RefSeq" id="WP_011163073.1">
    <property type="nucleotide sequence ID" value="NC_005363.1"/>
</dbReference>
<dbReference type="SMR" id="Q6MQH6"/>
<dbReference type="STRING" id="264462.Bd0491"/>
<dbReference type="GeneID" id="93011601"/>
<dbReference type="KEGG" id="bba:Bd0491"/>
<dbReference type="eggNOG" id="COG0101">
    <property type="taxonomic scope" value="Bacteria"/>
</dbReference>
<dbReference type="HOGENOM" id="CLU_014673_0_1_7"/>
<dbReference type="Proteomes" id="UP000008080">
    <property type="component" value="Chromosome"/>
</dbReference>
<dbReference type="GO" id="GO:0003723">
    <property type="term" value="F:RNA binding"/>
    <property type="evidence" value="ECO:0007669"/>
    <property type="project" value="InterPro"/>
</dbReference>
<dbReference type="GO" id="GO:0160147">
    <property type="term" value="F:tRNA pseudouridine(38-40) synthase activity"/>
    <property type="evidence" value="ECO:0007669"/>
    <property type="project" value="UniProtKB-EC"/>
</dbReference>
<dbReference type="GO" id="GO:0031119">
    <property type="term" value="P:tRNA pseudouridine synthesis"/>
    <property type="evidence" value="ECO:0007669"/>
    <property type="project" value="UniProtKB-UniRule"/>
</dbReference>
<dbReference type="CDD" id="cd02570">
    <property type="entry name" value="PseudoU_synth_EcTruA"/>
    <property type="match status" value="1"/>
</dbReference>
<dbReference type="FunFam" id="3.30.70.580:FF:000001">
    <property type="entry name" value="tRNA pseudouridine synthase A"/>
    <property type="match status" value="1"/>
</dbReference>
<dbReference type="Gene3D" id="3.30.70.660">
    <property type="entry name" value="Pseudouridine synthase I, catalytic domain, C-terminal subdomain"/>
    <property type="match status" value="1"/>
</dbReference>
<dbReference type="Gene3D" id="3.30.70.580">
    <property type="entry name" value="Pseudouridine synthase I, catalytic domain, N-terminal subdomain"/>
    <property type="match status" value="1"/>
</dbReference>
<dbReference type="HAMAP" id="MF_00171">
    <property type="entry name" value="TruA"/>
    <property type="match status" value="1"/>
</dbReference>
<dbReference type="InterPro" id="IPR020103">
    <property type="entry name" value="PsdUridine_synth_cat_dom_sf"/>
</dbReference>
<dbReference type="InterPro" id="IPR001406">
    <property type="entry name" value="PsdUridine_synth_TruA"/>
</dbReference>
<dbReference type="InterPro" id="IPR020097">
    <property type="entry name" value="PsdUridine_synth_TruA_a/b_dom"/>
</dbReference>
<dbReference type="InterPro" id="IPR020095">
    <property type="entry name" value="PsdUridine_synth_TruA_C"/>
</dbReference>
<dbReference type="InterPro" id="IPR020094">
    <property type="entry name" value="TruA/RsuA/RluB/E/F_N"/>
</dbReference>
<dbReference type="NCBIfam" id="TIGR00071">
    <property type="entry name" value="hisT_truA"/>
    <property type="match status" value="1"/>
</dbReference>
<dbReference type="PANTHER" id="PTHR11142">
    <property type="entry name" value="PSEUDOURIDYLATE SYNTHASE"/>
    <property type="match status" value="1"/>
</dbReference>
<dbReference type="PANTHER" id="PTHR11142:SF0">
    <property type="entry name" value="TRNA PSEUDOURIDINE SYNTHASE-LIKE 1"/>
    <property type="match status" value="1"/>
</dbReference>
<dbReference type="Pfam" id="PF01416">
    <property type="entry name" value="PseudoU_synth_1"/>
    <property type="match status" value="2"/>
</dbReference>
<dbReference type="PIRSF" id="PIRSF001430">
    <property type="entry name" value="tRNA_psdUrid_synth"/>
    <property type="match status" value="1"/>
</dbReference>
<dbReference type="SUPFAM" id="SSF55120">
    <property type="entry name" value="Pseudouridine synthase"/>
    <property type="match status" value="1"/>
</dbReference>